<dbReference type="EMBL" id="FO081016">
    <property type="protein sequence ID" value="CCD68511.1"/>
    <property type="molecule type" value="Genomic_DNA"/>
</dbReference>
<dbReference type="PIR" id="T15894">
    <property type="entry name" value="T15894"/>
</dbReference>
<dbReference type="RefSeq" id="NP_501420.1">
    <property type="nucleotide sequence ID" value="NM_069019.5"/>
</dbReference>
<dbReference type="BioGRID" id="42746">
    <property type="interactions" value="1"/>
</dbReference>
<dbReference type="FunCoup" id="Q19005">
    <property type="interactions" value="188"/>
</dbReference>
<dbReference type="STRING" id="6239.D2096.6.1"/>
<dbReference type="PaxDb" id="6239-D2096.6"/>
<dbReference type="PeptideAtlas" id="Q19005"/>
<dbReference type="EnsemblMetazoa" id="D2096.6.1">
    <property type="protein sequence ID" value="D2096.6.1"/>
    <property type="gene ID" value="WBGene00017073"/>
</dbReference>
<dbReference type="GeneID" id="177633"/>
<dbReference type="KEGG" id="cel:CELE_D2096.6"/>
<dbReference type="UCSC" id="D2096.6">
    <property type="organism name" value="c. elegans"/>
</dbReference>
<dbReference type="AGR" id="WB:WBGene00017073"/>
<dbReference type="CTD" id="177633"/>
<dbReference type="WormBase" id="D2096.6">
    <property type="protein sequence ID" value="CE04304"/>
    <property type="gene ID" value="WBGene00017073"/>
</dbReference>
<dbReference type="eggNOG" id="ENOG502SQ9H">
    <property type="taxonomic scope" value="Eukaryota"/>
</dbReference>
<dbReference type="GeneTree" id="ENSGT00970000196440"/>
<dbReference type="HOGENOM" id="CLU_099180_0_0_1"/>
<dbReference type="InParanoid" id="Q19005"/>
<dbReference type="OMA" id="SSINQWM"/>
<dbReference type="OrthoDB" id="5862654at2759"/>
<dbReference type="PRO" id="PR:Q19005"/>
<dbReference type="Proteomes" id="UP000001940">
    <property type="component" value="Chromosome IV"/>
</dbReference>
<dbReference type="Bgee" id="WBGene00017073">
    <property type="expression patterns" value="Expressed in pharyngeal muscle cell (C elegans) and 3 other cell types or tissues"/>
</dbReference>
<dbReference type="GO" id="GO:0030968">
    <property type="term" value="P:endoplasmic reticulum unfolded protein response"/>
    <property type="evidence" value="ECO:0007007"/>
    <property type="project" value="WormBase"/>
</dbReference>
<dbReference type="InterPro" id="IPR035231">
    <property type="entry name" value="DUF5346"/>
</dbReference>
<dbReference type="Pfam" id="PF17281">
    <property type="entry name" value="DUF5346"/>
    <property type="match status" value="1"/>
</dbReference>
<protein>
    <recommendedName>
        <fullName>Uncharacterized protein D2096.6</fullName>
    </recommendedName>
</protein>
<organism>
    <name type="scientific">Caenorhabditis elegans</name>
    <dbReference type="NCBI Taxonomy" id="6239"/>
    <lineage>
        <taxon>Eukaryota</taxon>
        <taxon>Metazoa</taxon>
        <taxon>Ecdysozoa</taxon>
        <taxon>Nematoda</taxon>
        <taxon>Chromadorea</taxon>
        <taxon>Rhabditida</taxon>
        <taxon>Rhabditina</taxon>
        <taxon>Rhabditomorpha</taxon>
        <taxon>Rhabditoidea</taxon>
        <taxon>Rhabditidae</taxon>
        <taxon>Peloderinae</taxon>
        <taxon>Caenorhabditis</taxon>
    </lineage>
</organism>
<gene>
    <name type="ORF">D2096.6</name>
</gene>
<feature type="chain" id="PRO_0000065268" description="Uncharacterized protein D2096.6">
    <location>
        <begin position="1"/>
        <end position="171"/>
    </location>
</feature>
<feature type="region of interest" description="Disordered" evidence="1">
    <location>
        <begin position="139"/>
        <end position="171"/>
    </location>
</feature>
<feature type="compositionally biased region" description="Polar residues" evidence="1">
    <location>
        <begin position="158"/>
        <end position="171"/>
    </location>
</feature>
<accession>Q19005</accession>
<reference key="1">
    <citation type="journal article" date="1998" name="Science">
        <title>Genome sequence of the nematode C. elegans: a platform for investigating biology.</title>
        <authorList>
            <consortium name="The C. elegans sequencing consortium"/>
        </authorList>
    </citation>
    <scope>NUCLEOTIDE SEQUENCE [LARGE SCALE GENOMIC DNA]</scope>
    <source>
        <strain>Bristol N2</strain>
    </source>
</reference>
<evidence type="ECO:0000256" key="1">
    <source>
        <dbReference type="SAM" id="MobiDB-lite"/>
    </source>
</evidence>
<sequence length="171" mass="18566">MFSKLFTTSCLVAIALTTAQEEVSGKVSSTKRRQYVAAQQPAVPVVAPVGQCPGGPSLPIECDPKRPWPQCPPQSYCYATNSVDIGPYFCCPVWSTYGAAWRPATPFYNYVPPVPANWPDVAKMTANWPAAAVSVPVKARKPTKSDDEEEEVGKMGGISSSINSWVQRQKL</sequence>
<name>YYT6_CAEEL</name>
<proteinExistence type="predicted"/>
<keyword id="KW-1185">Reference proteome</keyword>